<gene>
    <name evidence="1" type="primary">tatB</name>
    <name type="ordered locus">TM1040_1796</name>
</gene>
<keyword id="KW-0997">Cell inner membrane</keyword>
<keyword id="KW-1003">Cell membrane</keyword>
<keyword id="KW-0472">Membrane</keyword>
<keyword id="KW-0653">Protein transport</keyword>
<keyword id="KW-1185">Reference proteome</keyword>
<keyword id="KW-0811">Translocation</keyword>
<keyword id="KW-0812">Transmembrane</keyword>
<keyword id="KW-1133">Transmembrane helix</keyword>
<keyword id="KW-0813">Transport</keyword>
<accession>Q1GFN7</accession>
<name>TATB_RUEST</name>
<comment type="function">
    <text evidence="1">Part of the twin-arginine translocation (Tat) system that transports large folded proteins containing a characteristic twin-arginine motif in their signal peptide across membranes. Together with TatC, TatB is part of a receptor directly interacting with Tat signal peptides. TatB may form an oligomeric binding site that transiently accommodates folded Tat precursor proteins before their translocation.</text>
</comment>
<comment type="subunit">
    <text evidence="1">The Tat system comprises two distinct complexes: a TatABC complex, containing multiple copies of TatA, TatB and TatC subunits, and a separate TatA complex, containing only TatA subunits. Substrates initially bind to the TatABC complex, which probably triggers association of the separate TatA complex to form the active translocon.</text>
</comment>
<comment type="subcellular location">
    <subcellularLocation>
        <location evidence="1">Cell inner membrane</location>
        <topology evidence="1">Single-pass membrane protein</topology>
    </subcellularLocation>
</comment>
<comment type="similarity">
    <text evidence="1">Belongs to the TatB family.</text>
</comment>
<reference key="1">
    <citation type="submission" date="2006-05" db="EMBL/GenBank/DDBJ databases">
        <title>Complete sequence of chromosome of Silicibacter sp. TM1040.</title>
        <authorList>
            <consortium name="US DOE Joint Genome Institute"/>
            <person name="Copeland A."/>
            <person name="Lucas S."/>
            <person name="Lapidus A."/>
            <person name="Barry K."/>
            <person name="Detter J.C."/>
            <person name="Glavina del Rio T."/>
            <person name="Hammon N."/>
            <person name="Israni S."/>
            <person name="Dalin E."/>
            <person name="Tice H."/>
            <person name="Pitluck S."/>
            <person name="Brettin T."/>
            <person name="Bruce D."/>
            <person name="Han C."/>
            <person name="Tapia R."/>
            <person name="Goodwin L."/>
            <person name="Thompson L.S."/>
            <person name="Gilna P."/>
            <person name="Schmutz J."/>
            <person name="Larimer F."/>
            <person name="Land M."/>
            <person name="Hauser L."/>
            <person name="Kyrpides N."/>
            <person name="Kim E."/>
            <person name="Belas R."/>
            <person name="Moran M.A."/>
            <person name="Buchan A."/>
            <person name="Gonzalez J.M."/>
            <person name="Schell M.A."/>
            <person name="Sun F."/>
            <person name="Richardson P."/>
        </authorList>
    </citation>
    <scope>NUCLEOTIDE SEQUENCE [LARGE SCALE GENOMIC DNA]</scope>
    <source>
        <strain>TM1040</strain>
    </source>
</reference>
<sequence>MFDLGWTELLVIGVVALIVVGPKDLPKLFRNVGRFVGKARGMAREFSRAMEDAADEAGVSDIQKTFKTATNPMGSAMDSVKQATRDLTDSIDPTKFDPESETGKLAADRAENAKKIQAATARAAADRMAREAAEAAAKAEEAEAALSATPASTASSDSETKA</sequence>
<protein>
    <recommendedName>
        <fullName evidence="1">Sec-independent protein translocase protein TatB</fullName>
    </recommendedName>
</protein>
<organism>
    <name type="scientific">Ruegeria sp. (strain TM1040)</name>
    <name type="common">Silicibacter sp.</name>
    <dbReference type="NCBI Taxonomy" id="292414"/>
    <lineage>
        <taxon>Bacteria</taxon>
        <taxon>Pseudomonadati</taxon>
        <taxon>Pseudomonadota</taxon>
        <taxon>Alphaproteobacteria</taxon>
        <taxon>Rhodobacterales</taxon>
        <taxon>Roseobacteraceae</taxon>
        <taxon>Ruegeria</taxon>
    </lineage>
</organism>
<proteinExistence type="inferred from homology"/>
<dbReference type="EMBL" id="CP000377">
    <property type="protein sequence ID" value="ABF64529.1"/>
    <property type="molecule type" value="Genomic_DNA"/>
</dbReference>
<dbReference type="RefSeq" id="WP_011539124.1">
    <property type="nucleotide sequence ID" value="NC_008044.1"/>
</dbReference>
<dbReference type="STRING" id="292414.TM1040_1796"/>
<dbReference type="KEGG" id="sit:TM1040_1796"/>
<dbReference type="eggNOG" id="COG1826">
    <property type="taxonomic scope" value="Bacteria"/>
</dbReference>
<dbReference type="HOGENOM" id="CLU_086034_1_3_5"/>
<dbReference type="OrthoDB" id="7206969at2"/>
<dbReference type="Proteomes" id="UP000000636">
    <property type="component" value="Chromosome"/>
</dbReference>
<dbReference type="GO" id="GO:0033281">
    <property type="term" value="C:TAT protein transport complex"/>
    <property type="evidence" value="ECO:0007669"/>
    <property type="project" value="UniProtKB-UniRule"/>
</dbReference>
<dbReference type="GO" id="GO:0008320">
    <property type="term" value="F:protein transmembrane transporter activity"/>
    <property type="evidence" value="ECO:0007669"/>
    <property type="project" value="UniProtKB-UniRule"/>
</dbReference>
<dbReference type="GO" id="GO:0043953">
    <property type="term" value="P:protein transport by the Tat complex"/>
    <property type="evidence" value="ECO:0007669"/>
    <property type="project" value="UniProtKB-UniRule"/>
</dbReference>
<dbReference type="Gene3D" id="1.20.5.3310">
    <property type="match status" value="1"/>
</dbReference>
<dbReference type="HAMAP" id="MF_00237">
    <property type="entry name" value="TatB"/>
    <property type="match status" value="1"/>
</dbReference>
<dbReference type="InterPro" id="IPR003369">
    <property type="entry name" value="TatA/B/E"/>
</dbReference>
<dbReference type="InterPro" id="IPR018448">
    <property type="entry name" value="TatB"/>
</dbReference>
<dbReference type="NCBIfam" id="TIGR01410">
    <property type="entry name" value="tatB"/>
    <property type="match status" value="1"/>
</dbReference>
<dbReference type="PANTHER" id="PTHR33162">
    <property type="entry name" value="SEC-INDEPENDENT PROTEIN TRANSLOCASE PROTEIN TATA, CHLOROPLASTIC"/>
    <property type="match status" value="1"/>
</dbReference>
<dbReference type="PANTHER" id="PTHR33162:SF1">
    <property type="entry name" value="SEC-INDEPENDENT PROTEIN TRANSLOCASE PROTEIN TATA, CHLOROPLASTIC"/>
    <property type="match status" value="1"/>
</dbReference>
<dbReference type="Pfam" id="PF02416">
    <property type="entry name" value="TatA_B_E"/>
    <property type="match status" value="1"/>
</dbReference>
<dbReference type="PRINTS" id="PR01506">
    <property type="entry name" value="TATBPROTEIN"/>
</dbReference>
<feature type="chain" id="PRO_0000301242" description="Sec-independent protein translocase protein TatB">
    <location>
        <begin position="1"/>
        <end position="162"/>
    </location>
</feature>
<feature type="transmembrane region" description="Helical" evidence="1">
    <location>
        <begin position="1"/>
        <end position="21"/>
    </location>
</feature>
<feature type="region of interest" description="Disordered" evidence="2">
    <location>
        <begin position="69"/>
        <end position="111"/>
    </location>
</feature>
<feature type="region of interest" description="Disordered" evidence="2">
    <location>
        <begin position="124"/>
        <end position="162"/>
    </location>
</feature>
<feature type="compositionally biased region" description="Basic and acidic residues" evidence="2">
    <location>
        <begin position="83"/>
        <end position="111"/>
    </location>
</feature>
<feature type="compositionally biased region" description="Basic and acidic residues" evidence="2">
    <location>
        <begin position="124"/>
        <end position="141"/>
    </location>
</feature>
<feature type="compositionally biased region" description="Low complexity" evidence="2">
    <location>
        <begin position="144"/>
        <end position="155"/>
    </location>
</feature>
<evidence type="ECO:0000255" key="1">
    <source>
        <dbReference type="HAMAP-Rule" id="MF_00237"/>
    </source>
</evidence>
<evidence type="ECO:0000256" key="2">
    <source>
        <dbReference type="SAM" id="MobiDB-lite"/>
    </source>
</evidence>